<protein>
    <recommendedName>
        <fullName evidence="1">Phosphopantetheine adenylyltransferase</fullName>
        <ecNumber evidence="1">2.7.7.3</ecNumber>
    </recommendedName>
    <alternativeName>
        <fullName evidence="1">Dephospho-CoA pyrophosphorylase</fullName>
    </alternativeName>
    <alternativeName>
        <fullName evidence="1">Pantetheine-phosphate adenylyltransferase</fullName>
        <shortName evidence="1">PPAT</shortName>
    </alternativeName>
</protein>
<name>COAD_SHEWM</name>
<comment type="function">
    <text evidence="1">Reversibly transfers an adenylyl group from ATP to 4'-phosphopantetheine, yielding dephospho-CoA (dPCoA) and pyrophosphate.</text>
</comment>
<comment type="catalytic activity">
    <reaction evidence="1">
        <text>(R)-4'-phosphopantetheine + ATP + H(+) = 3'-dephospho-CoA + diphosphate</text>
        <dbReference type="Rhea" id="RHEA:19801"/>
        <dbReference type="ChEBI" id="CHEBI:15378"/>
        <dbReference type="ChEBI" id="CHEBI:30616"/>
        <dbReference type="ChEBI" id="CHEBI:33019"/>
        <dbReference type="ChEBI" id="CHEBI:57328"/>
        <dbReference type="ChEBI" id="CHEBI:61723"/>
        <dbReference type="EC" id="2.7.7.3"/>
    </reaction>
</comment>
<comment type="cofactor">
    <cofactor evidence="1">
        <name>Mg(2+)</name>
        <dbReference type="ChEBI" id="CHEBI:18420"/>
    </cofactor>
</comment>
<comment type="pathway">
    <text evidence="1">Cofactor biosynthesis; coenzyme A biosynthesis; CoA from (R)-pantothenate: step 4/5.</text>
</comment>
<comment type="subunit">
    <text evidence="1">Homohexamer.</text>
</comment>
<comment type="subcellular location">
    <subcellularLocation>
        <location evidence="1">Cytoplasm</location>
    </subcellularLocation>
</comment>
<comment type="similarity">
    <text evidence="1">Belongs to the bacterial CoaD family.</text>
</comment>
<evidence type="ECO:0000255" key="1">
    <source>
        <dbReference type="HAMAP-Rule" id="MF_00151"/>
    </source>
</evidence>
<feature type="chain" id="PRO_1000096840" description="Phosphopantetheine adenylyltransferase">
    <location>
        <begin position="1"/>
        <end position="158"/>
    </location>
</feature>
<feature type="binding site" evidence="1">
    <location>
        <begin position="10"/>
        <end position="11"/>
    </location>
    <ligand>
        <name>ATP</name>
        <dbReference type="ChEBI" id="CHEBI:30616"/>
    </ligand>
</feature>
<feature type="binding site" evidence="1">
    <location>
        <position position="10"/>
    </location>
    <ligand>
        <name>substrate</name>
    </ligand>
</feature>
<feature type="binding site" evidence="1">
    <location>
        <position position="18"/>
    </location>
    <ligand>
        <name>ATP</name>
        <dbReference type="ChEBI" id="CHEBI:30616"/>
    </ligand>
</feature>
<feature type="binding site" evidence="1">
    <location>
        <position position="42"/>
    </location>
    <ligand>
        <name>substrate</name>
    </ligand>
</feature>
<feature type="binding site" evidence="1">
    <location>
        <position position="74"/>
    </location>
    <ligand>
        <name>substrate</name>
    </ligand>
</feature>
<feature type="binding site" evidence="1">
    <location>
        <position position="88"/>
    </location>
    <ligand>
        <name>substrate</name>
    </ligand>
</feature>
<feature type="binding site" evidence="1">
    <location>
        <begin position="89"/>
        <end position="91"/>
    </location>
    <ligand>
        <name>ATP</name>
        <dbReference type="ChEBI" id="CHEBI:30616"/>
    </ligand>
</feature>
<feature type="binding site" evidence="1">
    <location>
        <position position="99"/>
    </location>
    <ligand>
        <name>ATP</name>
        <dbReference type="ChEBI" id="CHEBI:30616"/>
    </ligand>
</feature>
<feature type="binding site" evidence="1">
    <location>
        <begin position="124"/>
        <end position="130"/>
    </location>
    <ligand>
        <name>ATP</name>
        <dbReference type="ChEBI" id="CHEBI:30616"/>
    </ligand>
</feature>
<feature type="site" description="Transition state stabilizer" evidence="1">
    <location>
        <position position="18"/>
    </location>
</feature>
<accession>B1KL36</accession>
<sequence length="158" mass="17469">MHKRAIYPGTFDPVTNGHADLIERAAKLFQHVVIGIAANPSKQPRFTLDERVQLLKLVTAHLDNVEVVGFSGLLVDFAKDQQASVLVRGLRAVSDFEYEFQLANMNRRLDPDLESVFLTPSEENSFISSTLVKEVALHGGDVSQFVHPEVSKALLSKG</sequence>
<dbReference type="EC" id="2.7.7.3" evidence="1"/>
<dbReference type="EMBL" id="CP000961">
    <property type="protein sequence ID" value="ACA84377.1"/>
    <property type="molecule type" value="Genomic_DNA"/>
</dbReference>
<dbReference type="RefSeq" id="WP_012322726.1">
    <property type="nucleotide sequence ID" value="NC_010506.1"/>
</dbReference>
<dbReference type="SMR" id="B1KL36"/>
<dbReference type="STRING" id="392500.Swoo_0076"/>
<dbReference type="KEGG" id="swd:Swoo_0076"/>
<dbReference type="eggNOG" id="COG0669">
    <property type="taxonomic scope" value="Bacteria"/>
</dbReference>
<dbReference type="HOGENOM" id="CLU_100149_0_1_6"/>
<dbReference type="UniPathway" id="UPA00241">
    <property type="reaction ID" value="UER00355"/>
</dbReference>
<dbReference type="Proteomes" id="UP000002168">
    <property type="component" value="Chromosome"/>
</dbReference>
<dbReference type="GO" id="GO:0005737">
    <property type="term" value="C:cytoplasm"/>
    <property type="evidence" value="ECO:0007669"/>
    <property type="project" value="UniProtKB-SubCell"/>
</dbReference>
<dbReference type="GO" id="GO:0005524">
    <property type="term" value="F:ATP binding"/>
    <property type="evidence" value="ECO:0007669"/>
    <property type="project" value="UniProtKB-KW"/>
</dbReference>
<dbReference type="GO" id="GO:0004595">
    <property type="term" value="F:pantetheine-phosphate adenylyltransferase activity"/>
    <property type="evidence" value="ECO:0007669"/>
    <property type="project" value="UniProtKB-UniRule"/>
</dbReference>
<dbReference type="GO" id="GO:0015937">
    <property type="term" value="P:coenzyme A biosynthetic process"/>
    <property type="evidence" value="ECO:0007669"/>
    <property type="project" value="UniProtKB-UniRule"/>
</dbReference>
<dbReference type="CDD" id="cd02163">
    <property type="entry name" value="PPAT"/>
    <property type="match status" value="1"/>
</dbReference>
<dbReference type="FunFam" id="3.40.50.620:FF:000012">
    <property type="entry name" value="Phosphopantetheine adenylyltransferase"/>
    <property type="match status" value="1"/>
</dbReference>
<dbReference type="Gene3D" id="3.40.50.620">
    <property type="entry name" value="HUPs"/>
    <property type="match status" value="1"/>
</dbReference>
<dbReference type="HAMAP" id="MF_00151">
    <property type="entry name" value="PPAT_bact"/>
    <property type="match status" value="1"/>
</dbReference>
<dbReference type="InterPro" id="IPR004821">
    <property type="entry name" value="Cyt_trans-like"/>
</dbReference>
<dbReference type="InterPro" id="IPR001980">
    <property type="entry name" value="PPAT"/>
</dbReference>
<dbReference type="InterPro" id="IPR014729">
    <property type="entry name" value="Rossmann-like_a/b/a_fold"/>
</dbReference>
<dbReference type="NCBIfam" id="TIGR01510">
    <property type="entry name" value="coaD_prev_kdtB"/>
    <property type="match status" value="1"/>
</dbReference>
<dbReference type="NCBIfam" id="TIGR00125">
    <property type="entry name" value="cyt_tran_rel"/>
    <property type="match status" value="1"/>
</dbReference>
<dbReference type="PANTHER" id="PTHR21342">
    <property type="entry name" value="PHOSPHOPANTETHEINE ADENYLYLTRANSFERASE"/>
    <property type="match status" value="1"/>
</dbReference>
<dbReference type="PANTHER" id="PTHR21342:SF1">
    <property type="entry name" value="PHOSPHOPANTETHEINE ADENYLYLTRANSFERASE"/>
    <property type="match status" value="1"/>
</dbReference>
<dbReference type="Pfam" id="PF01467">
    <property type="entry name" value="CTP_transf_like"/>
    <property type="match status" value="1"/>
</dbReference>
<dbReference type="PRINTS" id="PR01020">
    <property type="entry name" value="LPSBIOSNTHSS"/>
</dbReference>
<dbReference type="SUPFAM" id="SSF52374">
    <property type="entry name" value="Nucleotidylyl transferase"/>
    <property type="match status" value="1"/>
</dbReference>
<organism>
    <name type="scientific">Shewanella woodyi (strain ATCC 51908 / MS32)</name>
    <dbReference type="NCBI Taxonomy" id="392500"/>
    <lineage>
        <taxon>Bacteria</taxon>
        <taxon>Pseudomonadati</taxon>
        <taxon>Pseudomonadota</taxon>
        <taxon>Gammaproteobacteria</taxon>
        <taxon>Alteromonadales</taxon>
        <taxon>Shewanellaceae</taxon>
        <taxon>Shewanella</taxon>
    </lineage>
</organism>
<gene>
    <name evidence="1" type="primary">coaD</name>
    <name type="ordered locus">Swoo_0076</name>
</gene>
<reference key="1">
    <citation type="submission" date="2008-02" db="EMBL/GenBank/DDBJ databases">
        <title>Complete sequence of Shewanella woodyi ATCC 51908.</title>
        <authorList>
            <consortium name="US DOE Joint Genome Institute"/>
            <person name="Copeland A."/>
            <person name="Lucas S."/>
            <person name="Lapidus A."/>
            <person name="Glavina del Rio T."/>
            <person name="Dalin E."/>
            <person name="Tice H."/>
            <person name="Bruce D."/>
            <person name="Goodwin L."/>
            <person name="Pitluck S."/>
            <person name="Sims D."/>
            <person name="Brettin T."/>
            <person name="Detter J.C."/>
            <person name="Han C."/>
            <person name="Kuske C.R."/>
            <person name="Schmutz J."/>
            <person name="Larimer F."/>
            <person name="Land M."/>
            <person name="Hauser L."/>
            <person name="Kyrpides N."/>
            <person name="Lykidis A."/>
            <person name="Zhao J.-S."/>
            <person name="Richardson P."/>
        </authorList>
    </citation>
    <scope>NUCLEOTIDE SEQUENCE [LARGE SCALE GENOMIC DNA]</scope>
    <source>
        <strain>ATCC 51908 / MS32</strain>
    </source>
</reference>
<proteinExistence type="inferred from homology"/>
<keyword id="KW-0067">ATP-binding</keyword>
<keyword id="KW-0173">Coenzyme A biosynthesis</keyword>
<keyword id="KW-0963">Cytoplasm</keyword>
<keyword id="KW-0460">Magnesium</keyword>
<keyword id="KW-0547">Nucleotide-binding</keyword>
<keyword id="KW-0548">Nucleotidyltransferase</keyword>
<keyword id="KW-1185">Reference proteome</keyword>
<keyword id="KW-0808">Transferase</keyword>